<organism>
    <name type="scientific">Trichormus variabilis (strain ATCC 29413 / PCC 7937)</name>
    <name type="common">Anabaena variabilis</name>
    <dbReference type="NCBI Taxonomy" id="240292"/>
    <lineage>
        <taxon>Bacteria</taxon>
        <taxon>Bacillati</taxon>
        <taxon>Cyanobacteriota</taxon>
        <taxon>Cyanophyceae</taxon>
        <taxon>Nostocales</taxon>
        <taxon>Nostocaceae</taxon>
        <taxon>Trichormus</taxon>
    </lineage>
</organism>
<evidence type="ECO:0000250" key="1"/>
<evidence type="ECO:0000305" key="2"/>
<comment type="function">
    <text evidence="1">Catalyzes the decarboxylative condensation of pimeloyl-[acyl-carrier protein] and L-alanine to produce 8-amino-7-oxononanoate (AON), [acyl-carrier protein], and carbon dioxide.</text>
</comment>
<comment type="catalytic activity">
    <reaction>
        <text>6-carboxyhexanoyl-[ACP] + L-alanine + H(+) = (8S)-8-amino-7-oxononanoate + holo-[ACP] + CO2</text>
        <dbReference type="Rhea" id="RHEA:42288"/>
        <dbReference type="Rhea" id="RHEA-COMP:9685"/>
        <dbReference type="Rhea" id="RHEA-COMP:9955"/>
        <dbReference type="ChEBI" id="CHEBI:15378"/>
        <dbReference type="ChEBI" id="CHEBI:16526"/>
        <dbReference type="ChEBI" id="CHEBI:57972"/>
        <dbReference type="ChEBI" id="CHEBI:64479"/>
        <dbReference type="ChEBI" id="CHEBI:78846"/>
        <dbReference type="ChEBI" id="CHEBI:149468"/>
        <dbReference type="EC" id="2.3.1.47"/>
    </reaction>
</comment>
<comment type="cofactor">
    <cofactor evidence="1">
        <name>pyridoxal 5'-phosphate</name>
        <dbReference type="ChEBI" id="CHEBI:597326"/>
    </cofactor>
</comment>
<comment type="pathway">
    <text>Cofactor biosynthesis; biotin biosynthesis.</text>
</comment>
<comment type="subunit">
    <text evidence="1">Homodimer.</text>
</comment>
<comment type="similarity">
    <text evidence="2">Belongs to the class-II pyridoxal-phosphate-dependent aminotransferase family. BioF subfamily.</text>
</comment>
<accession>Q3M9A4</accession>
<sequence>MPDPYAWLQNSLLTIHRADWYRSVQTIQGRAGASVVLGGKEVINFASNDYLGLAGDERLIAAAVAATQEFGTGSTGSRLLSGHRELHGELEKAIASWKQTEDALVFSSGYLANIGAIAALVGKRDLILSDQYNHSSLKNGAILSGATVREYSHCEVGELKTQLLEQRQNYRRCLILTDSVFSMDGDLCPLPALLDLAEQFSCMLLVDEAHATGVMGKTGAGCVEHFGCTGRQLIQIGTLSKALGSLGGYVAGSHPLIDYLRNRAPSWIYTTGLSPADTAAALAAINIAQQEPQHRMQLWHNVNYLRELLQKIPNLKLLPSASPILCFQLSSPSEALQVGKQLKQAGIFAPAIRPPTVPTSRIRISLMATHKPAHIEKLVAVLADIS</sequence>
<gene>
    <name type="primary">bioF</name>
    <name type="ordered locus">Ava_2819</name>
</gene>
<keyword id="KW-0093">Biotin biosynthesis</keyword>
<keyword id="KW-0663">Pyridoxal phosphate</keyword>
<keyword id="KW-0808">Transferase</keyword>
<reference key="1">
    <citation type="journal article" date="2014" name="Stand. Genomic Sci.">
        <title>Complete genome sequence of Anabaena variabilis ATCC 29413.</title>
        <authorList>
            <person name="Thiel T."/>
            <person name="Pratte B.S."/>
            <person name="Zhong J."/>
            <person name="Goodwin L."/>
            <person name="Copeland A."/>
            <person name="Lucas S."/>
            <person name="Han C."/>
            <person name="Pitluck S."/>
            <person name="Land M.L."/>
            <person name="Kyrpides N.C."/>
            <person name="Woyke T."/>
        </authorList>
    </citation>
    <scope>NUCLEOTIDE SEQUENCE [LARGE SCALE GENOMIC DNA]</scope>
    <source>
        <strain>ATCC 29413 / PCC 7937</strain>
    </source>
</reference>
<dbReference type="EC" id="2.3.1.47"/>
<dbReference type="EMBL" id="CP000117">
    <property type="protein sequence ID" value="ABA22432.1"/>
    <property type="molecule type" value="Genomic_DNA"/>
</dbReference>
<dbReference type="SMR" id="Q3M9A4"/>
<dbReference type="STRING" id="240292.Ava_2819"/>
<dbReference type="KEGG" id="ava:Ava_2819"/>
<dbReference type="eggNOG" id="COG0156">
    <property type="taxonomic scope" value="Bacteria"/>
</dbReference>
<dbReference type="HOGENOM" id="CLU_015846_11_0_3"/>
<dbReference type="UniPathway" id="UPA00078"/>
<dbReference type="Proteomes" id="UP000002533">
    <property type="component" value="Chromosome"/>
</dbReference>
<dbReference type="GO" id="GO:0008710">
    <property type="term" value="F:8-amino-7-oxononanoate synthase activity"/>
    <property type="evidence" value="ECO:0007669"/>
    <property type="project" value="UniProtKB-EC"/>
</dbReference>
<dbReference type="GO" id="GO:0030170">
    <property type="term" value="F:pyridoxal phosphate binding"/>
    <property type="evidence" value="ECO:0007669"/>
    <property type="project" value="InterPro"/>
</dbReference>
<dbReference type="GO" id="GO:0009102">
    <property type="term" value="P:biotin biosynthetic process"/>
    <property type="evidence" value="ECO:0007669"/>
    <property type="project" value="UniProtKB-UniPathway"/>
</dbReference>
<dbReference type="CDD" id="cd06454">
    <property type="entry name" value="KBL_like"/>
    <property type="match status" value="1"/>
</dbReference>
<dbReference type="Gene3D" id="3.90.1150.10">
    <property type="entry name" value="Aspartate Aminotransferase, domain 1"/>
    <property type="match status" value="1"/>
</dbReference>
<dbReference type="Gene3D" id="3.40.640.10">
    <property type="entry name" value="Type I PLP-dependent aspartate aminotransferase-like (Major domain)"/>
    <property type="match status" value="1"/>
</dbReference>
<dbReference type="InterPro" id="IPR001917">
    <property type="entry name" value="Aminotrans_II_pyridoxalP_BS"/>
</dbReference>
<dbReference type="InterPro" id="IPR004839">
    <property type="entry name" value="Aminotransferase_I/II_large"/>
</dbReference>
<dbReference type="InterPro" id="IPR050087">
    <property type="entry name" value="AON_synthase_class-II"/>
</dbReference>
<dbReference type="InterPro" id="IPR004723">
    <property type="entry name" value="AONS_Archaea/Proteobacteria"/>
</dbReference>
<dbReference type="InterPro" id="IPR015424">
    <property type="entry name" value="PyrdxlP-dep_Trfase"/>
</dbReference>
<dbReference type="InterPro" id="IPR015421">
    <property type="entry name" value="PyrdxlP-dep_Trfase_major"/>
</dbReference>
<dbReference type="InterPro" id="IPR015422">
    <property type="entry name" value="PyrdxlP-dep_Trfase_small"/>
</dbReference>
<dbReference type="NCBIfam" id="TIGR00858">
    <property type="entry name" value="bioF"/>
    <property type="match status" value="1"/>
</dbReference>
<dbReference type="PANTHER" id="PTHR13693:SF100">
    <property type="entry name" value="8-AMINO-7-OXONONANOATE SYNTHASE"/>
    <property type="match status" value="1"/>
</dbReference>
<dbReference type="PANTHER" id="PTHR13693">
    <property type="entry name" value="CLASS II AMINOTRANSFERASE/8-AMINO-7-OXONONANOATE SYNTHASE"/>
    <property type="match status" value="1"/>
</dbReference>
<dbReference type="Pfam" id="PF00155">
    <property type="entry name" value="Aminotran_1_2"/>
    <property type="match status" value="1"/>
</dbReference>
<dbReference type="SUPFAM" id="SSF53383">
    <property type="entry name" value="PLP-dependent transferases"/>
    <property type="match status" value="1"/>
</dbReference>
<dbReference type="PROSITE" id="PS00599">
    <property type="entry name" value="AA_TRANSFER_CLASS_2"/>
    <property type="match status" value="1"/>
</dbReference>
<proteinExistence type="inferred from homology"/>
<name>BIOF_TRIV2</name>
<protein>
    <recommendedName>
        <fullName>Putative 8-amino-7-oxononanoate synthase</fullName>
        <shortName>AONS</shortName>
        <ecNumber>2.3.1.47</ecNumber>
    </recommendedName>
    <alternativeName>
        <fullName>7-keto-8-amino-pelargonic acid synthase</fullName>
        <shortName>7-KAP synthase</shortName>
    </alternativeName>
    <alternativeName>
        <fullName>8-amino-7-ketopelargonate synthase</fullName>
    </alternativeName>
</protein>
<feature type="chain" id="PRO_0000380899" description="Putative 8-amino-7-oxononanoate synthase">
    <location>
        <begin position="1"/>
        <end position="386"/>
    </location>
</feature>
<feature type="binding site" evidence="1">
    <location>
        <position position="22"/>
    </location>
    <ligand>
        <name>substrate</name>
    </ligand>
</feature>
<feature type="binding site" evidence="1">
    <location>
        <begin position="109"/>
        <end position="110"/>
    </location>
    <ligand>
        <name>pyridoxal 5'-phosphate</name>
        <dbReference type="ChEBI" id="CHEBI:597326"/>
    </ligand>
</feature>
<feature type="binding site" evidence="1">
    <location>
        <position position="134"/>
    </location>
    <ligand>
        <name>substrate</name>
    </ligand>
</feature>
<feature type="binding site" evidence="1">
    <location>
        <position position="182"/>
    </location>
    <ligand>
        <name>pyridoxal 5'-phosphate</name>
        <dbReference type="ChEBI" id="CHEBI:597326"/>
    </ligand>
</feature>
<feature type="binding site" evidence="1">
    <location>
        <begin position="207"/>
        <end position="210"/>
    </location>
    <ligand>
        <name>pyridoxal 5'-phosphate</name>
        <dbReference type="ChEBI" id="CHEBI:597326"/>
    </ligand>
</feature>
<feature type="binding site" evidence="1">
    <location>
        <begin position="238"/>
        <end position="241"/>
    </location>
    <ligand>
        <name>pyridoxal 5'-phosphate</name>
        <dbReference type="ChEBI" id="CHEBI:597326"/>
    </ligand>
</feature>
<feature type="binding site" evidence="1">
    <location>
        <position position="356"/>
    </location>
    <ligand>
        <name>substrate</name>
    </ligand>
</feature>
<feature type="modified residue" description="N6-(pyridoxal phosphate)lysine" evidence="1">
    <location>
        <position position="241"/>
    </location>
</feature>